<evidence type="ECO:0000255" key="1"/>
<evidence type="ECO:0000255" key="2">
    <source>
        <dbReference type="PROSITE-ProRule" id="PRU00108"/>
    </source>
</evidence>
<evidence type="ECO:0000256" key="3">
    <source>
        <dbReference type="SAM" id="MobiDB-lite"/>
    </source>
</evidence>
<evidence type="ECO:0000305" key="4"/>
<proteinExistence type="inferred from homology"/>
<protein>
    <recommendedName>
        <fullName>Mating-type locus allele B3 protein</fullName>
    </recommendedName>
</protein>
<organism>
    <name type="scientific">Mycosarcoma maydis</name>
    <name type="common">Corn smut fungus</name>
    <name type="synonym">Ustilago maydis</name>
    <dbReference type="NCBI Taxonomy" id="5270"/>
    <lineage>
        <taxon>Eukaryota</taxon>
        <taxon>Fungi</taxon>
        <taxon>Dikarya</taxon>
        <taxon>Basidiomycota</taxon>
        <taxon>Ustilaginomycotina</taxon>
        <taxon>Ustilaginomycetes</taxon>
        <taxon>Ustilaginales</taxon>
        <taxon>Ustilaginaceae</taxon>
        <taxon>Mycosarcoma</taxon>
    </lineage>
</organism>
<feature type="chain" id="PRO_0000049403" description="Mating-type locus allele B3 protein">
    <location>
        <begin position="1"/>
        <end position="410"/>
    </location>
</feature>
<feature type="DNA-binding region" description="Homeobox; TALE-type" evidence="2">
    <location>
        <begin position="107"/>
        <end position="184"/>
    </location>
</feature>
<feature type="region of interest" description="Variable domain between B alleles">
    <location>
        <begin position="1"/>
        <end position="110"/>
    </location>
</feature>
<feature type="region of interest" description="Highly conserved between B alleles">
    <location>
        <begin position="111"/>
        <end position="410"/>
    </location>
</feature>
<feature type="region of interest" description="Disordered" evidence="3">
    <location>
        <begin position="203"/>
        <end position="224"/>
    </location>
</feature>
<feature type="region of interest" description="Disordered" evidence="3">
    <location>
        <begin position="278"/>
        <end position="335"/>
    </location>
</feature>
<feature type="region of interest" description="Not essential for B3 function">
    <location>
        <begin position="333"/>
        <end position="410"/>
    </location>
</feature>
<feature type="short sequence motif" description="Nuclear localization signal" evidence="1">
    <location>
        <begin position="276"/>
        <end position="308"/>
    </location>
</feature>
<feature type="compositionally biased region" description="Polar residues" evidence="3">
    <location>
        <begin position="205"/>
        <end position="219"/>
    </location>
</feature>
<feature type="compositionally biased region" description="Basic residues" evidence="3">
    <location>
        <begin position="291"/>
        <end position="307"/>
    </location>
</feature>
<feature type="compositionally biased region" description="Polar residues" evidence="3">
    <location>
        <begin position="312"/>
        <end position="335"/>
    </location>
</feature>
<reference key="1">
    <citation type="journal article" date="1990" name="Cell">
        <title>The b alleles of U. maydis, whose combinations program pathogenic development, code for polypeptides containing a homeodomain-related motif.</title>
        <authorList>
            <person name="Schulz B."/>
            <person name="Banuett F."/>
            <person name="Dahl M."/>
            <person name="Schlesinger R."/>
            <person name="Schaefer W."/>
            <person name="Martin T."/>
            <person name="Herskowitz I."/>
            <person name="Kahmann R."/>
        </authorList>
    </citation>
    <scope>NUCLEOTIDE SEQUENCE [GENOMIC DNA]</scope>
    <source>
        <strain>RK32</strain>
    </source>
</reference>
<reference key="2">
    <citation type="journal article" date="1990" name="Genes Dev.">
        <title>The b mating-type locus of Ustilago maydis contains variable and constant regions.</title>
        <authorList>
            <person name="Kronstad J.W."/>
            <person name="Leong S.A."/>
        </authorList>
    </citation>
    <scope>NUCLEOTIDE SEQUENCE [GENOMIC DNA]</scope>
    <source>
        <strain>ATCC 18604</strain>
    </source>
</reference>
<accession>P22017</accession>
<keyword id="KW-0238">DNA-binding</keyword>
<keyword id="KW-0371">Homeobox</keyword>
<keyword id="KW-0539">Nucleus</keyword>
<sequence length="410" mass="46323">MSRDPKLSLSKFLECLNEIEHEFLRDKVEHRPVLVRKLQELQQKTPKHVAKLPHEPEMIQQIHQAAHRIDIVAQAFIRFDQKFVSLCSEIVHDTTKVMQEANVVSPGEGCRNLSEDLPAYHMRNHFLHTLENPYPTQEEKEGLVRLTNESTARIRPSNAIRPPLEVHQLTLWFINARRRSGWSHILKKFAREDPSRMKRLVRAKLSSSNQSTPPSLTSEKPSDDLDVVLSDNLGRPLTLADKQQFEDDWASMISWIKYGVKEKVGDWVYDLCAASKKTPKPGMPRPVTTVAKRHPARKTKPAAKPKSRTANPRASTTPSIDSTLDSSKLESTPELSMCSTADTSFSTFGSSLSMSHYNPFQDGNDILQSPTVKARGNRKVKALPKRAGKQQPDEVDNGKIPFLCLSVAFV</sequence>
<name>B3_MYCMD</name>
<comment type="function">
    <text>The B locus has at least 25 alleles, and any combination of two different B alleles yields a multimeric regulatory protein, that activates genes responsible for the pathogenicity and for the sexual development of the fungus within the corn plant.</text>
</comment>
<comment type="subcellular location">
    <subcellularLocation>
        <location>Nucleus</location>
    </subcellularLocation>
</comment>
<comment type="similarity">
    <text evidence="4">Belongs to the TALE/M-ATYP homeobox family.</text>
</comment>
<dbReference type="EMBL" id="M58555">
    <property type="protein sequence ID" value="AAA63555.1"/>
    <property type="molecule type" value="Genomic_DNA"/>
</dbReference>
<dbReference type="PIR" id="C36671">
    <property type="entry name" value="C36671"/>
</dbReference>
<dbReference type="PIR" id="D32696">
    <property type="entry name" value="D32696"/>
</dbReference>
<dbReference type="SMR" id="P22017"/>
<dbReference type="VEuPathDB" id="FungiDB:UMAG_12052"/>
<dbReference type="GO" id="GO:0005634">
    <property type="term" value="C:nucleus"/>
    <property type="evidence" value="ECO:0007669"/>
    <property type="project" value="UniProtKB-SubCell"/>
</dbReference>
<dbReference type="GO" id="GO:0003677">
    <property type="term" value="F:DNA binding"/>
    <property type="evidence" value="ECO:0007669"/>
    <property type="project" value="UniProtKB-KW"/>
</dbReference>
<dbReference type="GO" id="GO:0006355">
    <property type="term" value="P:regulation of DNA-templated transcription"/>
    <property type="evidence" value="ECO:0007669"/>
    <property type="project" value="InterPro"/>
</dbReference>
<dbReference type="CDD" id="cd00086">
    <property type="entry name" value="homeodomain"/>
    <property type="match status" value="1"/>
</dbReference>
<dbReference type="Gene3D" id="1.10.10.60">
    <property type="entry name" value="Homeodomain-like"/>
    <property type="match status" value="1"/>
</dbReference>
<dbReference type="InterPro" id="IPR001356">
    <property type="entry name" value="HD"/>
</dbReference>
<dbReference type="InterPro" id="IPR009057">
    <property type="entry name" value="Homeodomain-like_sf"/>
</dbReference>
<dbReference type="InterPro" id="IPR008422">
    <property type="entry name" value="KN_HD"/>
</dbReference>
<dbReference type="InterPro" id="IPR008888">
    <property type="entry name" value="Ustilago_mating"/>
</dbReference>
<dbReference type="Pfam" id="PF05920">
    <property type="entry name" value="Homeobox_KN"/>
    <property type="match status" value="1"/>
</dbReference>
<dbReference type="Pfam" id="PF05722">
    <property type="entry name" value="Ustilago_mating"/>
    <property type="match status" value="1"/>
</dbReference>
<dbReference type="SUPFAM" id="SSF46689">
    <property type="entry name" value="Homeodomain-like"/>
    <property type="match status" value="1"/>
</dbReference>
<dbReference type="PROSITE" id="PS50071">
    <property type="entry name" value="HOMEOBOX_2"/>
    <property type="match status" value="1"/>
</dbReference>